<dbReference type="EC" id="4.2.3.153" evidence="1"/>
<dbReference type="EMBL" id="CP000099">
    <property type="protein sequence ID" value="AAZ70069.1"/>
    <property type="molecule type" value="Genomic_DNA"/>
</dbReference>
<dbReference type="SMR" id="Q46DH3"/>
<dbReference type="STRING" id="269797.Mbar_A1101"/>
<dbReference type="PaxDb" id="269797-Mbar_A1101"/>
<dbReference type="KEGG" id="mba:Mbar_A1101"/>
<dbReference type="eggNOG" id="arCOG04482">
    <property type="taxonomic scope" value="Archaea"/>
</dbReference>
<dbReference type="HOGENOM" id="CLU_068659_0_0_2"/>
<dbReference type="OrthoDB" id="81473at2157"/>
<dbReference type="UniPathway" id="UPA00080"/>
<dbReference type="GO" id="GO:0016830">
    <property type="term" value="F:carbon-carbon lyase activity"/>
    <property type="evidence" value="ECO:0007669"/>
    <property type="project" value="UniProtKB-UniRule"/>
</dbReference>
<dbReference type="GO" id="GO:2001120">
    <property type="term" value="P:methanofuran biosynthetic process"/>
    <property type="evidence" value="ECO:0007669"/>
    <property type="project" value="UniProtKB-UniRule"/>
</dbReference>
<dbReference type="HAMAP" id="MF_00681">
    <property type="entry name" value="MfnB"/>
    <property type="match status" value="1"/>
</dbReference>
<dbReference type="InterPro" id="IPR007565">
    <property type="entry name" value="4HFCP_synth"/>
</dbReference>
<dbReference type="InterPro" id="IPR035081">
    <property type="entry name" value="4HFCP_synth_arc"/>
</dbReference>
<dbReference type="NCBIfam" id="NF002575">
    <property type="entry name" value="PRK02227.1-3"/>
    <property type="match status" value="1"/>
</dbReference>
<dbReference type="Pfam" id="PF04476">
    <property type="entry name" value="4HFCP_synth"/>
    <property type="match status" value="1"/>
</dbReference>
<dbReference type="PIRSF" id="PIRSF015957">
    <property type="entry name" value="UCP015957"/>
    <property type="match status" value="1"/>
</dbReference>
<dbReference type="SUPFAM" id="SSF51569">
    <property type="entry name" value="Aldolase"/>
    <property type="match status" value="1"/>
</dbReference>
<organism>
    <name type="scientific">Methanosarcina barkeri (strain Fusaro / DSM 804)</name>
    <dbReference type="NCBI Taxonomy" id="269797"/>
    <lineage>
        <taxon>Archaea</taxon>
        <taxon>Methanobacteriati</taxon>
        <taxon>Methanobacteriota</taxon>
        <taxon>Stenosarchaea group</taxon>
        <taxon>Methanomicrobia</taxon>
        <taxon>Methanosarcinales</taxon>
        <taxon>Methanosarcinaceae</taxon>
        <taxon>Methanosarcina</taxon>
    </lineage>
</organism>
<evidence type="ECO:0000255" key="1">
    <source>
        <dbReference type="HAMAP-Rule" id="MF_00681"/>
    </source>
</evidence>
<sequence>MKLLISPINKEEAIIASRGGADIVDVKNPKEGSLGANFPWVIRDVKGAVNGRQPISATIGDFNYKPGTASLAAFGAAVAGADYIKVGLYDIQTEDQALELITKITQAVKDYDSTKKVVASGYSDYKRINSISPLLLPSIAAKAGADVVMVDTGIKDGKSTFEFMDEEELKKFTGLAHECGLENAIAGSLKFEDLPVLERIGPDIIGVRGMVCGGDRTNSIRQELVEKLVAECQA</sequence>
<protein>
    <recommendedName>
        <fullName evidence="1">(5-formylfuran-3-yl)methyl phosphate synthase</fullName>
        <ecNumber evidence="1">4.2.3.153</ecNumber>
    </recommendedName>
    <alternativeName>
        <fullName evidence="1">4-(hydroxymethyl)-2-furancarboxaldehyde-phosphate synthase</fullName>
        <shortName evidence="1">4-HFC-P synthase</shortName>
    </alternativeName>
</protein>
<gene>
    <name evidence="1" type="primary">mfnB</name>
    <name type="ordered locus">Mbar_A1101</name>
</gene>
<comment type="function">
    <text evidence="1">Catalyzes the formation of 4-(hydroxymethyl)-2-furancarboxaldehyde phosphate (4-HFC-P) from two molecules of glyceraldehyde-3-P (GA-3-P).</text>
</comment>
<comment type="catalytic activity">
    <reaction evidence="1">
        <text>2 D-glyceraldehyde 3-phosphate = 4-(hydroxymethyl)-2-furancarboxaldehyde phosphate + phosphate + 2 H2O</text>
        <dbReference type="Rhea" id="RHEA:43536"/>
        <dbReference type="ChEBI" id="CHEBI:15377"/>
        <dbReference type="ChEBI" id="CHEBI:43474"/>
        <dbReference type="ChEBI" id="CHEBI:59776"/>
        <dbReference type="ChEBI" id="CHEBI:83407"/>
        <dbReference type="EC" id="4.2.3.153"/>
    </reaction>
</comment>
<comment type="pathway">
    <text evidence="1">Cofactor biosynthesis; methanofuran biosynthesis.</text>
</comment>
<comment type="similarity">
    <text evidence="1">Belongs to the MfnB family.</text>
</comment>
<name>MFNB_METBF</name>
<keyword id="KW-0456">Lyase</keyword>
<keyword id="KW-0704">Schiff base</keyword>
<proteinExistence type="inferred from homology"/>
<accession>Q46DH3</accession>
<reference key="1">
    <citation type="journal article" date="2006" name="J. Bacteriol.">
        <title>The Methanosarcina barkeri genome: comparative analysis with Methanosarcina acetivorans and Methanosarcina mazei reveals extensive rearrangement within methanosarcinal genomes.</title>
        <authorList>
            <person name="Maeder D.L."/>
            <person name="Anderson I."/>
            <person name="Brettin T.S."/>
            <person name="Bruce D.C."/>
            <person name="Gilna P."/>
            <person name="Han C.S."/>
            <person name="Lapidus A."/>
            <person name="Metcalf W.W."/>
            <person name="Saunders E."/>
            <person name="Tapia R."/>
            <person name="Sowers K.R."/>
        </authorList>
    </citation>
    <scope>NUCLEOTIDE SEQUENCE [LARGE SCALE GENOMIC DNA]</scope>
    <source>
        <strain>Fusaro / DSM 804</strain>
    </source>
</reference>
<feature type="chain" id="PRO_1000044919" description="(5-formylfuran-3-yl)methyl phosphate synthase">
    <location>
        <begin position="1"/>
        <end position="234"/>
    </location>
</feature>
<feature type="active site" description="Schiff-base intermediate with substrate" evidence="1">
    <location>
        <position position="27"/>
    </location>
</feature>
<feature type="active site" description="Proton acceptor" evidence="1">
    <location>
        <position position="85"/>
    </location>
</feature>